<accession>A5G276</accession>
<reference key="1">
    <citation type="submission" date="2007-05" db="EMBL/GenBank/DDBJ databases">
        <title>Complete sequence of chromosome of Acidiphilium cryptum JF-5.</title>
        <authorList>
            <consortium name="US DOE Joint Genome Institute"/>
            <person name="Copeland A."/>
            <person name="Lucas S."/>
            <person name="Lapidus A."/>
            <person name="Barry K."/>
            <person name="Detter J.C."/>
            <person name="Glavina del Rio T."/>
            <person name="Hammon N."/>
            <person name="Israni S."/>
            <person name="Dalin E."/>
            <person name="Tice H."/>
            <person name="Pitluck S."/>
            <person name="Sims D."/>
            <person name="Brettin T."/>
            <person name="Bruce D."/>
            <person name="Han C."/>
            <person name="Schmutz J."/>
            <person name="Larimer F."/>
            <person name="Land M."/>
            <person name="Hauser L."/>
            <person name="Kyrpides N."/>
            <person name="Kim E."/>
            <person name="Magnuson T."/>
            <person name="Richardson P."/>
        </authorList>
    </citation>
    <scope>NUCLEOTIDE SEQUENCE [LARGE SCALE GENOMIC DNA]</scope>
    <source>
        <strain>JF-5</strain>
    </source>
</reference>
<protein>
    <recommendedName>
        <fullName evidence="1">Formate--tetrahydrofolate ligase</fullName>
        <ecNumber evidence="1">6.3.4.3</ecNumber>
    </recommendedName>
    <alternativeName>
        <fullName evidence="1">Formyltetrahydrofolate synthetase</fullName>
        <shortName evidence="1">FHS</shortName>
        <shortName evidence="1">FTHFS</shortName>
    </alternativeName>
</protein>
<gene>
    <name evidence="1" type="primary">fhs</name>
    <name type="ordered locus">Acry_2767</name>
</gene>
<keyword id="KW-0067">ATP-binding</keyword>
<keyword id="KW-0436">Ligase</keyword>
<keyword id="KW-0547">Nucleotide-binding</keyword>
<keyword id="KW-0554">One-carbon metabolism</keyword>
<keyword id="KW-1185">Reference proteome</keyword>
<proteinExistence type="inferred from homology"/>
<feature type="chain" id="PRO_1000068787" description="Formate--tetrahydrofolate ligase">
    <location>
        <begin position="1"/>
        <end position="557"/>
    </location>
</feature>
<feature type="binding site" evidence="1">
    <location>
        <begin position="65"/>
        <end position="72"/>
    </location>
    <ligand>
        <name>ATP</name>
        <dbReference type="ChEBI" id="CHEBI:30616"/>
    </ligand>
</feature>
<dbReference type="EC" id="6.3.4.3" evidence="1"/>
<dbReference type="EMBL" id="CP000697">
    <property type="protein sequence ID" value="ABQ31958.1"/>
    <property type="molecule type" value="Genomic_DNA"/>
</dbReference>
<dbReference type="RefSeq" id="WP_012040297.1">
    <property type="nucleotide sequence ID" value="NC_009484.1"/>
</dbReference>
<dbReference type="SMR" id="A5G276"/>
<dbReference type="STRING" id="349163.Acry_2767"/>
<dbReference type="KEGG" id="acr:Acry_2767"/>
<dbReference type="eggNOG" id="COG2759">
    <property type="taxonomic scope" value="Bacteria"/>
</dbReference>
<dbReference type="HOGENOM" id="CLU_003601_3_3_5"/>
<dbReference type="UniPathway" id="UPA00193"/>
<dbReference type="Proteomes" id="UP000000245">
    <property type="component" value="Chromosome"/>
</dbReference>
<dbReference type="GO" id="GO:0005524">
    <property type="term" value="F:ATP binding"/>
    <property type="evidence" value="ECO:0007669"/>
    <property type="project" value="UniProtKB-UniRule"/>
</dbReference>
<dbReference type="GO" id="GO:0004329">
    <property type="term" value="F:formate-tetrahydrofolate ligase activity"/>
    <property type="evidence" value="ECO:0007669"/>
    <property type="project" value="UniProtKB-UniRule"/>
</dbReference>
<dbReference type="GO" id="GO:0035999">
    <property type="term" value="P:tetrahydrofolate interconversion"/>
    <property type="evidence" value="ECO:0007669"/>
    <property type="project" value="UniProtKB-UniRule"/>
</dbReference>
<dbReference type="CDD" id="cd00477">
    <property type="entry name" value="FTHFS"/>
    <property type="match status" value="1"/>
</dbReference>
<dbReference type="FunFam" id="3.30.1510.10:FF:000001">
    <property type="entry name" value="Formate--tetrahydrofolate ligase"/>
    <property type="match status" value="1"/>
</dbReference>
<dbReference type="FunFam" id="3.10.410.10:FF:000001">
    <property type="entry name" value="Putative formate--tetrahydrofolate ligase"/>
    <property type="match status" value="1"/>
</dbReference>
<dbReference type="Gene3D" id="3.30.1510.10">
    <property type="entry name" value="Domain 2, N(10)-formyltetrahydrofolate synthetase"/>
    <property type="match status" value="1"/>
</dbReference>
<dbReference type="Gene3D" id="3.10.410.10">
    <property type="entry name" value="Formyltetrahydrofolate synthetase, domain 3"/>
    <property type="match status" value="1"/>
</dbReference>
<dbReference type="Gene3D" id="3.40.50.300">
    <property type="entry name" value="P-loop containing nucleotide triphosphate hydrolases"/>
    <property type="match status" value="1"/>
</dbReference>
<dbReference type="HAMAP" id="MF_01543">
    <property type="entry name" value="FTHFS"/>
    <property type="match status" value="1"/>
</dbReference>
<dbReference type="InterPro" id="IPR000559">
    <property type="entry name" value="Formate_THF_ligase"/>
</dbReference>
<dbReference type="InterPro" id="IPR020628">
    <property type="entry name" value="Formate_THF_ligase_CS"/>
</dbReference>
<dbReference type="InterPro" id="IPR027417">
    <property type="entry name" value="P-loop_NTPase"/>
</dbReference>
<dbReference type="NCBIfam" id="NF010030">
    <property type="entry name" value="PRK13505.1"/>
    <property type="match status" value="1"/>
</dbReference>
<dbReference type="Pfam" id="PF01268">
    <property type="entry name" value="FTHFS"/>
    <property type="match status" value="1"/>
</dbReference>
<dbReference type="SUPFAM" id="SSF52540">
    <property type="entry name" value="P-loop containing nucleoside triphosphate hydrolases"/>
    <property type="match status" value="1"/>
</dbReference>
<dbReference type="PROSITE" id="PS00722">
    <property type="entry name" value="FTHFS_2"/>
    <property type="match status" value="1"/>
</dbReference>
<name>FTHS_ACICJ</name>
<comment type="catalytic activity">
    <reaction evidence="1">
        <text>(6S)-5,6,7,8-tetrahydrofolate + formate + ATP = (6R)-10-formyltetrahydrofolate + ADP + phosphate</text>
        <dbReference type="Rhea" id="RHEA:20221"/>
        <dbReference type="ChEBI" id="CHEBI:15740"/>
        <dbReference type="ChEBI" id="CHEBI:30616"/>
        <dbReference type="ChEBI" id="CHEBI:43474"/>
        <dbReference type="ChEBI" id="CHEBI:57453"/>
        <dbReference type="ChEBI" id="CHEBI:195366"/>
        <dbReference type="ChEBI" id="CHEBI:456216"/>
        <dbReference type="EC" id="6.3.4.3"/>
    </reaction>
</comment>
<comment type="pathway">
    <text evidence="1">One-carbon metabolism; tetrahydrofolate interconversion.</text>
</comment>
<comment type="similarity">
    <text evidence="1">Belongs to the formate--tetrahydrofolate ligase family.</text>
</comment>
<evidence type="ECO:0000255" key="1">
    <source>
        <dbReference type="HAMAP-Rule" id="MF_01543"/>
    </source>
</evidence>
<sequence length="557" mass="58079">MASDLDIARASRLRPIGEIAAAAGIPAEALIPYGRYKGKVDGGFIRSLEDRPDGALVLVVGISPTPAGEGKTTTSIGLGDALRAAGAKAMIALREPSLGPCFGQKGGATGGGRAQVAPMEEINLHFTGDFHAITSANNLLAAMLDNHVYWGNELGIDPRRIAFRRAIDMNDRALRQTVLGLGDGANGAAREQKFDITVASEVMAIFCLARDLDDLQRRLARIVVAERRDGSPVTPADLKAVGAMAALLRDALQPNLVQTLEGTPALVHGGPFANIAHGCNSVIATRTALKLADIVVTEAGFGADLGGEKFLDIKCRQAGLAPSCAVVVATIRALKMHAGVAKADLGAENPGAVARGAANLRRHVAAMRAFGLPVIVAINGFVTDTGAEREALRAALDEDGGARICFCTHWADGSAGATDLAQAVIETIAAKSARFAPLYPDDMKLPHKLRTIAQRIYGADDIELSPLAAKRLARFEAQGYDHLPVCVAKTQYSFTADPARRGAPTGFTVPIRDARLSAGAGFVVALAGDVMTMPGLPRIPAAEAIGLDPDGAIHGLF</sequence>
<organism>
    <name type="scientific">Acidiphilium cryptum (strain JF-5)</name>
    <dbReference type="NCBI Taxonomy" id="349163"/>
    <lineage>
        <taxon>Bacteria</taxon>
        <taxon>Pseudomonadati</taxon>
        <taxon>Pseudomonadota</taxon>
        <taxon>Alphaproteobacteria</taxon>
        <taxon>Acetobacterales</taxon>
        <taxon>Acidocellaceae</taxon>
        <taxon>Acidiphilium</taxon>
    </lineage>
</organism>